<dbReference type="EMBL" id="CP000724">
    <property type="protein sequence ID" value="ABR50555.1"/>
    <property type="molecule type" value="Genomic_DNA"/>
</dbReference>
<dbReference type="RefSeq" id="WP_012065446.1">
    <property type="nucleotide sequence ID" value="NC_009633.1"/>
</dbReference>
<dbReference type="SMR" id="A6TWI7"/>
<dbReference type="STRING" id="293826.Amet_4483"/>
<dbReference type="KEGG" id="amt:Amet_4483"/>
<dbReference type="eggNOG" id="COG0048">
    <property type="taxonomic scope" value="Bacteria"/>
</dbReference>
<dbReference type="HOGENOM" id="CLU_104295_1_2_9"/>
<dbReference type="OrthoDB" id="9802366at2"/>
<dbReference type="Proteomes" id="UP000001572">
    <property type="component" value="Chromosome"/>
</dbReference>
<dbReference type="GO" id="GO:0015935">
    <property type="term" value="C:small ribosomal subunit"/>
    <property type="evidence" value="ECO:0007669"/>
    <property type="project" value="InterPro"/>
</dbReference>
<dbReference type="GO" id="GO:0019843">
    <property type="term" value="F:rRNA binding"/>
    <property type="evidence" value="ECO:0007669"/>
    <property type="project" value="UniProtKB-UniRule"/>
</dbReference>
<dbReference type="GO" id="GO:0003735">
    <property type="term" value="F:structural constituent of ribosome"/>
    <property type="evidence" value="ECO:0007669"/>
    <property type="project" value="InterPro"/>
</dbReference>
<dbReference type="GO" id="GO:0000049">
    <property type="term" value="F:tRNA binding"/>
    <property type="evidence" value="ECO:0007669"/>
    <property type="project" value="UniProtKB-UniRule"/>
</dbReference>
<dbReference type="GO" id="GO:0006412">
    <property type="term" value="P:translation"/>
    <property type="evidence" value="ECO:0007669"/>
    <property type="project" value="UniProtKB-UniRule"/>
</dbReference>
<dbReference type="CDD" id="cd03368">
    <property type="entry name" value="Ribosomal_S12"/>
    <property type="match status" value="1"/>
</dbReference>
<dbReference type="FunFam" id="2.40.50.140:FF:000001">
    <property type="entry name" value="30S ribosomal protein S12"/>
    <property type="match status" value="1"/>
</dbReference>
<dbReference type="Gene3D" id="2.40.50.140">
    <property type="entry name" value="Nucleic acid-binding proteins"/>
    <property type="match status" value="1"/>
</dbReference>
<dbReference type="HAMAP" id="MF_00403_B">
    <property type="entry name" value="Ribosomal_uS12_B"/>
    <property type="match status" value="1"/>
</dbReference>
<dbReference type="InterPro" id="IPR012340">
    <property type="entry name" value="NA-bd_OB-fold"/>
</dbReference>
<dbReference type="InterPro" id="IPR006032">
    <property type="entry name" value="Ribosomal_uS12"/>
</dbReference>
<dbReference type="InterPro" id="IPR005679">
    <property type="entry name" value="Ribosomal_uS12_bac"/>
</dbReference>
<dbReference type="NCBIfam" id="TIGR00981">
    <property type="entry name" value="rpsL_bact"/>
    <property type="match status" value="1"/>
</dbReference>
<dbReference type="PANTHER" id="PTHR11652">
    <property type="entry name" value="30S RIBOSOMAL PROTEIN S12 FAMILY MEMBER"/>
    <property type="match status" value="1"/>
</dbReference>
<dbReference type="Pfam" id="PF00164">
    <property type="entry name" value="Ribosom_S12_S23"/>
    <property type="match status" value="1"/>
</dbReference>
<dbReference type="PRINTS" id="PR01034">
    <property type="entry name" value="RIBOSOMALS12"/>
</dbReference>
<dbReference type="SUPFAM" id="SSF50249">
    <property type="entry name" value="Nucleic acid-binding proteins"/>
    <property type="match status" value="1"/>
</dbReference>
<dbReference type="PROSITE" id="PS00055">
    <property type="entry name" value="RIBOSOMAL_S12"/>
    <property type="match status" value="1"/>
</dbReference>
<name>RS12_ALKMQ</name>
<gene>
    <name evidence="2" type="primary">rpsL</name>
    <name type="ordered locus">Amet_4483</name>
</gene>
<keyword id="KW-0488">Methylation</keyword>
<keyword id="KW-1185">Reference proteome</keyword>
<keyword id="KW-0687">Ribonucleoprotein</keyword>
<keyword id="KW-0689">Ribosomal protein</keyword>
<keyword id="KW-0694">RNA-binding</keyword>
<keyword id="KW-0699">rRNA-binding</keyword>
<keyword id="KW-0820">tRNA-binding</keyword>
<evidence type="ECO:0000250" key="1"/>
<evidence type="ECO:0000255" key="2">
    <source>
        <dbReference type="HAMAP-Rule" id="MF_00403"/>
    </source>
</evidence>
<evidence type="ECO:0000256" key="3">
    <source>
        <dbReference type="SAM" id="MobiDB-lite"/>
    </source>
</evidence>
<evidence type="ECO:0000305" key="4"/>
<feature type="chain" id="PRO_1000060809" description="Small ribosomal subunit protein uS12">
    <location>
        <begin position="1"/>
        <end position="139"/>
    </location>
</feature>
<feature type="region of interest" description="Disordered" evidence="3">
    <location>
        <begin position="1"/>
        <end position="21"/>
    </location>
</feature>
<feature type="modified residue" description="3-methylthioaspartic acid" evidence="1">
    <location>
        <position position="102"/>
    </location>
</feature>
<sequence length="139" mass="15248">MPTINQLVRKGRKAVQEKSTAPALQKGFNSLKRKSTDLSAPQKRGVCTSVKTITPKKPNSALRKVARVRLTNGIEVSAYIPGIGHNLQEHSVVLIRGGRIKDLPGVRYHIVRGTLDTAGVANRMQGRSKYGAKRPKDKK</sequence>
<organism>
    <name type="scientific">Alkaliphilus metalliredigens (strain QYMF)</name>
    <dbReference type="NCBI Taxonomy" id="293826"/>
    <lineage>
        <taxon>Bacteria</taxon>
        <taxon>Bacillati</taxon>
        <taxon>Bacillota</taxon>
        <taxon>Clostridia</taxon>
        <taxon>Peptostreptococcales</taxon>
        <taxon>Natronincolaceae</taxon>
        <taxon>Alkaliphilus</taxon>
    </lineage>
</organism>
<accession>A6TWI7</accession>
<reference key="1">
    <citation type="journal article" date="2016" name="Genome Announc.">
        <title>Complete genome sequence of Alkaliphilus metalliredigens strain QYMF, an alkaliphilic and metal-reducing bacterium isolated from borax-contaminated leachate ponds.</title>
        <authorList>
            <person name="Hwang C."/>
            <person name="Copeland A."/>
            <person name="Lucas S."/>
            <person name="Lapidus A."/>
            <person name="Barry K."/>
            <person name="Detter J.C."/>
            <person name="Glavina Del Rio T."/>
            <person name="Hammon N."/>
            <person name="Israni S."/>
            <person name="Dalin E."/>
            <person name="Tice H."/>
            <person name="Pitluck S."/>
            <person name="Chertkov O."/>
            <person name="Brettin T."/>
            <person name="Bruce D."/>
            <person name="Han C."/>
            <person name="Schmutz J."/>
            <person name="Larimer F."/>
            <person name="Land M.L."/>
            <person name="Hauser L."/>
            <person name="Kyrpides N."/>
            <person name="Mikhailova N."/>
            <person name="Ye Q."/>
            <person name="Zhou J."/>
            <person name="Richardson P."/>
            <person name="Fields M.W."/>
        </authorList>
    </citation>
    <scope>NUCLEOTIDE SEQUENCE [LARGE SCALE GENOMIC DNA]</scope>
    <source>
        <strain>QYMF</strain>
    </source>
</reference>
<protein>
    <recommendedName>
        <fullName evidence="2">Small ribosomal subunit protein uS12</fullName>
    </recommendedName>
    <alternativeName>
        <fullName evidence="4">30S ribosomal protein S12</fullName>
    </alternativeName>
</protein>
<comment type="function">
    <text evidence="2">With S4 and S5 plays an important role in translational accuracy.</text>
</comment>
<comment type="function">
    <text evidence="2">Interacts with and stabilizes bases of the 16S rRNA that are involved in tRNA selection in the A site and with the mRNA backbone. Located at the interface of the 30S and 50S subunits, it traverses the body of the 30S subunit contacting proteins on the other side and probably holding the rRNA structure together. The combined cluster of proteins S8, S12 and S17 appears to hold together the shoulder and platform of the 30S subunit.</text>
</comment>
<comment type="subunit">
    <text evidence="2">Part of the 30S ribosomal subunit. Contacts proteins S8 and S17. May interact with IF1 in the 30S initiation complex.</text>
</comment>
<comment type="similarity">
    <text evidence="2">Belongs to the universal ribosomal protein uS12 family.</text>
</comment>
<proteinExistence type="inferred from homology"/>